<proteinExistence type="evidence at protein level"/>
<accession>Q05129</accession>
<accession>B7UM92</accession>
<comment type="function">
    <text evidence="1 3">Component of the type III secretion system (T3SS), also called injectisome, which is used to inject bacterial effector proteins into eukaryotic host cells (By similarity). EspD and EspB are inserted into the host membrane where they form a pore and allow the translocation of effector proteins into the cytosol of target cells (By similarity). Necessary for intimate attachment to epithelial cells (PubMed:8393004).</text>
</comment>
<comment type="subunit">
    <text evidence="1">The core secretion machinery of the T3SS is composed of approximately 20 different proteins, including cytoplasmic components, a base, an export apparatus and a needle (By similarity). This subunit is involved in the formation of a pore, called the translocon, in host membrane (By similarity).</text>
</comment>
<comment type="interaction">
    <interactant intactId="EBI-2530062">
        <id>Q05129</id>
    </interactant>
    <interactant intactId="EBI-6414369">
        <id>B7UM93</id>
        <label>espD</label>
    </interactant>
    <organismsDiffer>false</organismsDiffer>
    <experiments>2</experiments>
</comment>
<comment type="subcellular location">
    <subcellularLocation>
        <location evidence="1">Secreted</location>
    </subcellularLocation>
    <subcellularLocation>
        <location evidence="1">Cell surface</location>
    </subcellularLocation>
    <subcellularLocation>
        <location evidence="5">Host membrane</location>
        <topology evidence="2">Single-pass membrane protein</topology>
    </subcellularLocation>
    <text evidence="1">Secreted via the type III secretion system (SPI-2 T3SS).</text>
</comment>
<comment type="similarity">
    <text evidence="5">Belongs to the SctB/EspB family.</text>
</comment>
<name>SCTB_ECO27</name>
<sequence length="321" mass="33141">MNTIDNNNAAIAVNSVLSSTTDSTSSTTTSTSSISSSLLTDGRVDISKLLLEVQKLLREMVTTLQDYLQKQLAQSYDIQKAVFESQNKAIDEKKAGATAALIGGAISSVLGILGSFAAINSATKGASDVAQQAASTSAKSIGTVSEASTKALAKASEGIADAADDAAGAMQQTIATAAKAASRTSGITDDVATSAQKASQVAEEAADAAQELAQKAGLLSRFTAAAGRISGSTPFIVVTSLAEGTKTLPTTISESVKSNHDINEQRAKSVENLQASNLDTYKQDVRRAQDDISSRLRDMTTTARDLTDLINRMGQAARLAG</sequence>
<organism>
    <name type="scientific">Escherichia coli O127:H6 (strain E2348/69 / EPEC)</name>
    <dbReference type="NCBI Taxonomy" id="574521"/>
    <lineage>
        <taxon>Bacteria</taxon>
        <taxon>Pseudomonadati</taxon>
        <taxon>Pseudomonadota</taxon>
        <taxon>Gammaproteobacteria</taxon>
        <taxon>Enterobacterales</taxon>
        <taxon>Enterobacteriaceae</taxon>
        <taxon>Escherichia</taxon>
    </lineage>
</organism>
<feature type="chain" id="PRO_0000086888" description="Type 3 secretion system translocon protein SctB">
    <location>
        <begin position="1"/>
        <end position="321"/>
    </location>
</feature>
<feature type="transmembrane region" description="Helical" evidence="2">
    <location>
        <begin position="99"/>
        <end position="119"/>
    </location>
</feature>
<gene>
    <name evidence="5" type="primary">sctB</name>
    <name evidence="4" type="synonym">eaeB</name>
    <name type="synonym">espB</name>
    <name type="ordered locus">E2348C_3934</name>
</gene>
<keyword id="KW-1043">Host membrane</keyword>
<keyword id="KW-0472">Membrane</keyword>
<keyword id="KW-1185">Reference proteome</keyword>
<keyword id="KW-0964">Secreted</keyword>
<keyword id="KW-0812">Transmembrane</keyword>
<keyword id="KW-1133">Transmembrane helix</keyword>
<keyword id="KW-0843">Virulence</keyword>
<reference key="1">
    <citation type="journal article" date="1993" name="J. Bacteriol.">
        <title>A second chromosomal gene necessary for intimate attachment of enteropathogenic Escherichia coli to epithelial cells.</title>
        <authorList>
            <person name="Donnenberg M.S."/>
            <person name="Yu J."/>
            <person name="Kaper J.B."/>
        </authorList>
    </citation>
    <scope>NUCLEOTIDE SEQUENCE [GENOMIC DNA]</scope>
    <scope>FUNCTION</scope>
    <source>
        <strain>E2348/69 / EPEC</strain>
    </source>
</reference>
<reference key="2">
    <citation type="journal article" date="1998" name="Mol. Microbiol.">
        <title>The complete sequence of the locus of enterocyte effacement (LEE) from enteropathogenic Escherichia coli E2348/69.</title>
        <authorList>
            <person name="Elliott S.J."/>
            <person name="Wainwright L.A."/>
            <person name="McDaniel T.K."/>
            <person name="Jarvis K.G."/>
            <person name="Deng Y.K."/>
            <person name="Lai L.C."/>
            <person name="McNamara B.P."/>
            <person name="Donnenberg M.S."/>
            <person name="Kaper J.B."/>
        </authorList>
    </citation>
    <scope>NUCLEOTIDE SEQUENCE [GENOMIC DNA]</scope>
    <source>
        <strain>E2348/69 / EPEC</strain>
    </source>
</reference>
<reference key="3">
    <citation type="journal article" date="2009" name="J. Bacteriol.">
        <title>Complete genome sequence and comparative genome analysis of enteropathogenic Escherichia coli O127:H6 strain E2348/69.</title>
        <authorList>
            <person name="Iguchi A."/>
            <person name="Thomson N.R."/>
            <person name="Ogura Y."/>
            <person name="Saunders D."/>
            <person name="Ooka T."/>
            <person name="Henderson I.R."/>
            <person name="Harris D."/>
            <person name="Asadulghani M."/>
            <person name="Kurokawa K."/>
            <person name="Dean P."/>
            <person name="Kenny B."/>
            <person name="Quail M.A."/>
            <person name="Thurston S."/>
            <person name="Dougan G."/>
            <person name="Hayashi T."/>
            <person name="Parkhill J."/>
            <person name="Frankel G."/>
        </authorList>
    </citation>
    <scope>NUCLEOTIDE SEQUENCE [LARGE SCALE GENOMIC DNA]</scope>
    <source>
        <strain>E2348/69 / EPEC</strain>
    </source>
</reference>
<protein>
    <recommendedName>
        <fullName evidence="5">Type 3 secretion system translocon protein SctB</fullName>
        <shortName evidence="5">T3SS translocon protein SctB</shortName>
    </recommendedName>
    <alternativeName>
        <fullName>Protein EaeB</fullName>
    </alternativeName>
</protein>
<dbReference type="EMBL" id="Z21555">
    <property type="protein sequence ID" value="CAA79733.1"/>
    <property type="molecule type" value="Genomic_DNA"/>
</dbReference>
<dbReference type="EMBL" id="AF022236">
    <property type="protein sequence ID" value="AAC38396.1"/>
    <property type="molecule type" value="Genomic_DNA"/>
</dbReference>
<dbReference type="EMBL" id="FM180568">
    <property type="protein sequence ID" value="CAS11482.1"/>
    <property type="molecule type" value="Genomic_DNA"/>
</dbReference>
<dbReference type="PIR" id="A40603">
    <property type="entry name" value="A40603"/>
</dbReference>
<dbReference type="RefSeq" id="WP_001091991.1">
    <property type="nucleotide sequence ID" value="NC_011601.1"/>
</dbReference>
<dbReference type="SMR" id="Q05129"/>
<dbReference type="IntAct" id="Q05129">
    <property type="interactions" value="2"/>
</dbReference>
<dbReference type="KEGG" id="ecg:E2348C_3934"/>
<dbReference type="HOGENOM" id="CLU_905357_0_0_6"/>
<dbReference type="PHI-base" id="PHI:11171"/>
<dbReference type="Proteomes" id="UP000008205">
    <property type="component" value="Chromosome"/>
</dbReference>
<dbReference type="GO" id="GO:0009986">
    <property type="term" value="C:cell surface"/>
    <property type="evidence" value="ECO:0007669"/>
    <property type="project" value="UniProtKB-SubCell"/>
</dbReference>
<dbReference type="GO" id="GO:0005576">
    <property type="term" value="C:extracellular region"/>
    <property type="evidence" value="ECO:0007669"/>
    <property type="project" value="UniProtKB-SubCell"/>
</dbReference>
<dbReference type="GO" id="GO:0033644">
    <property type="term" value="C:host cell membrane"/>
    <property type="evidence" value="ECO:0007669"/>
    <property type="project" value="UniProtKB-SubCell"/>
</dbReference>
<dbReference type="GO" id="GO:0016020">
    <property type="term" value="C:membrane"/>
    <property type="evidence" value="ECO:0007669"/>
    <property type="project" value="UniProtKB-KW"/>
</dbReference>
<evidence type="ECO:0000250" key="1">
    <source>
        <dbReference type="UniProtKB" id="Q9R803"/>
    </source>
</evidence>
<evidence type="ECO:0000255" key="2"/>
<evidence type="ECO:0000269" key="3">
    <source>
    </source>
</evidence>
<evidence type="ECO:0000303" key="4">
    <source>
    </source>
</evidence>
<evidence type="ECO:0000305" key="5"/>